<sequence length="144" mass="14966">MRLNTLSPAEGSKKAGKRLGRGIGSGLGKTGGRGHKGQKSRSGGGVRRGFEGGQMPLYRRLPKFGFTSRKAAITAEVRLSDLAKVEGGVVDLNTLKAANIIGIQIEFAKVILAGEVTTPVTVRGLRVTKGARAAIEAAGGKIEE</sequence>
<dbReference type="EMBL" id="CU928145">
    <property type="protein sequence ID" value="CAV00005.1"/>
    <property type="molecule type" value="Genomic_DNA"/>
</dbReference>
<dbReference type="RefSeq" id="WP_001238917.1">
    <property type="nucleotide sequence ID" value="NZ_CP028304.1"/>
</dbReference>
<dbReference type="SMR" id="B7LI02"/>
<dbReference type="GeneID" id="93778686"/>
<dbReference type="KEGG" id="eck:EC55989_3717"/>
<dbReference type="HOGENOM" id="CLU_055188_4_2_6"/>
<dbReference type="Proteomes" id="UP000000746">
    <property type="component" value="Chromosome"/>
</dbReference>
<dbReference type="GO" id="GO:0022625">
    <property type="term" value="C:cytosolic large ribosomal subunit"/>
    <property type="evidence" value="ECO:0007669"/>
    <property type="project" value="TreeGrafter"/>
</dbReference>
<dbReference type="GO" id="GO:0019843">
    <property type="term" value="F:rRNA binding"/>
    <property type="evidence" value="ECO:0007669"/>
    <property type="project" value="UniProtKB-UniRule"/>
</dbReference>
<dbReference type="GO" id="GO:0003735">
    <property type="term" value="F:structural constituent of ribosome"/>
    <property type="evidence" value="ECO:0007669"/>
    <property type="project" value="InterPro"/>
</dbReference>
<dbReference type="GO" id="GO:0006412">
    <property type="term" value="P:translation"/>
    <property type="evidence" value="ECO:0007669"/>
    <property type="project" value="UniProtKB-UniRule"/>
</dbReference>
<dbReference type="FunFam" id="3.100.10.10:FF:000003">
    <property type="entry name" value="50S ribosomal protein L15"/>
    <property type="match status" value="1"/>
</dbReference>
<dbReference type="Gene3D" id="3.100.10.10">
    <property type="match status" value="1"/>
</dbReference>
<dbReference type="HAMAP" id="MF_01341">
    <property type="entry name" value="Ribosomal_uL15"/>
    <property type="match status" value="1"/>
</dbReference>
<dbReference type="InterPro" id="IPR030878">
    <property type="entry name" value="Ribosomal_uL15"/>
</dbReference>
<dbReference type="InterPro" id="IPR021131">
    <property type="entry name" value="Ribosomal_uL15/eL18"/>
</dbReference>
<dbReference type="InterPro" id="IPR036227">
    <property type="entry name" value="Ribosomal_uL15/eL18_sf"/>
</dbReference>
<dbReference type="InterPro" id="IPR005749">
    <property type="entry name" value="Ribosomal_uL15_bac-type"/>
</dbReference>
<dbReference type="InterPro" id="IPR001196">
    <property type="entry name" value="Ribosomal_uL15_CS"/>
</dbReference>
<dbReference type="NCBIfam" id="TIGR01071">
    <property type="entry name" value="rplO_bact"/>
    <property type="match status" value="1"/>
</dbReference>
<dbReference type="PANTHER" id="PTHR12934">
    <property type="entry name" value="50S RIBOSOMAL PROTEIN L15"/>
    <property type="match status" value="1"/>
</dbReference>
<dbReference type="PANTHER" id="PTHR12934:SF11">
    <property type="entry name" value="LARGE RIBOSOMAL SUBUNIT PROTEIN UL15M"/>
    <property type="match status" value="1"/>
</dbReference>
<dbReference type="Pfam" id="PF00828">
    <property type="entry name" value="Ribosomal_L27A"/>
    <property type="match status" value="1"/>
</dbReference>
<dbReference type="SUPFAM" id="SSF52080">
    <property type="entry name" value="Ribosomal proteins L15p and L18e"/>
    <property type="match status" value="1"/>
</dbReference>
<dbReference type="PROSITE" id="PS00475">
    <property type="entry name" value="RIBOSOMAL_L15"/>
    <property type="match status" value="1"/>
</dbReference>
<name>RL15_ECO55</name>
<gene>
    <name evidence="1" type="primary">rplO</name>
    <name type="ordered locus">EC55989_3717</name>
</gene>
<protein>
    <recommendedName>
        <fullName evidence="1">Large ribosomal subunit protein uL15</fullName>
    </recommendedName>
    <alternativeName>
        <fullName evidence="3">50S ribosomal protein L15</fullName>
    </alternativeName>
</protein>
<comment type="function">
    <text evidence="1">Binds to the 23S rRNA.</text>
</comment>
<comment type="subunit">
    <text evidence="1">Part of the 50S ribosomal subunit.</text>
</comment>
<comment type="similarity">
    <text evidence="1">Belongs to the universal ribosomal protein uL15 family.</text>
</comment>
<accession>B7LI02</accession>
<proteinExistence type="inferred from homology"/>
<organism>
    <name type="scientific">Escherichia coli (strain 55989 / EAEC)</name>
    <dbReference type="NCBI Taxonomy" id="585055"/>
    <lineage>
        <taxon>Bacteria</taxon>
        <taxon>Pseudomonadati</taxon>
        <taxon>Pseudomonadota</taxon>
        <taxon>Gammaproteobacteria</taxon>
        <taxon>Enterobacterales</taxon>
        <taxon>Enterobacteriaceae</taxon>
        <taxon>Escherichia</taxon>
    </lineage>
</organism>
<evidence type="ECO:0000255" key="1">
    <source>
        <dbReference type="HAMAP-Rule" id="MF_01341"/>
    </source>
</evidence>
<evidence type="ECO:0000256" key="2">
    <source>
        <dbReference type="SAM" id="MobiDB-lite"/>
    </source>
</evidence>
<evidence type="ECO:0000305" key="3"/>
<reference key="1">
    <citation type="journal article" date="2009" name="PLoS Genet.">
        <title>Organised genome dynamics in the Escherichia coli species results in highly diverse adaptive paths.</title>
        <authorList>
            <person name="Touchon M."/>
            <person name="Hoede C."/>
            <person name="Tenaillon O."/>
            <person name="Barbe V."/>
            <person name="Baeriswyl S."/>
            <person name="Bidet P."/>
            <person name="Bingen E."/>
            <person name="Bonacorsi S."/>
            <person name="Bouchier C."/>
            <person name="Bouvet O."/>
            <person name="Calteau A."/>
            <person name="Chiapello H."/>
            <person name="Clermont O."/>
            <person name="Cruveiller S."/>
            <person name="Danchin A."/>
            <person name="Diard M."/>
            <person name="Dossat C."/>
            <person name="Karoui M.E."/>
            <person name="Frapy E."/>
            <person name="Garry L."/>
            <person name="Ghigo J.M."/>
            <person name="Gilles A.M."/>
            <person name="Johnson J."/>
            <person name="Le Bouguenec C."/>
            <person name="Lescat M."/>
            <person name="Mangenot S."/>
            <person name="Martinez-Jehanne V."/>
            <person name="Matic I."/>
            <person name="Nassif X."/>
            <person name="Oztas S."/>
            <person name="Petit M.A."/>
            <person name="Pichon C."/>
            <person name="Rouy Z."/>
            <person name="Ruf C.S."/>
            <person name="Schneider D."/>
            <person name="Tourret J."/>
            <person name="Vacherie B."/>
            <person name="Vallenet D."/>
            <person name="Medigue C."/>
            <person name="Rocha E.P.C."/>
            <person name="Denamur E."/>
        </authorList>
    </citation>
    <scope>NUCLEOTIDE SEQUENCE [LARGE SCALE GENOMIC DNA]</scope>
    <source>
        <strain>55989 / EAEC</strain>
    </source>
</reference>
<feature type="chain" id="PRO_1000166294" description="Large ribosomal subunit protein uL15">
    <location>
        <begin position="1"/>
        <end position="144"/>
    </location>
</feature>
<feature type="region of interest" description="Disordered" evidence="2">
    <location>
        <begin position="1"/>
        <end position="54"/>
    </location>
</feature>
<feature type="compositionally biased region" description="Gly residues" evidence="2">
    <location>
        <begin position="21"/>
        <end position="31"/>
    </location>
</feature>
<keyword id="KW-1185">Reference proteome</keyword>
<keyword id="KW-0687">Ribonucleoprotein</keyword>
<keyword id="KW-0689">Ribosomal protein</keyword>
<keyword id="KW-0694">RNA-binding</keyword>
<keyword id="KW-0699">rRNA-binding</keyword>